<reference key="1">
    <citation type="journal article" date="2004" name="J. Infect. Dis.">
        <title>Progress toward characterization of the group A Streptococcus metagenome: complete genome sequence of a macrolide-resistant serotype M6 strain.</title>
        <authorList>
            <person name="Banks D.J."/>
            <person name="Porcella S.F."/>
            <person name="Barbian K.D."/>
            <person name="Beres S.B."/>
            <person name="Philips L.E."/>
            <person name="Voyich J.M."/>
            <person name="DeLeo F.R."/>
            <person name="Martin J.M."/>
            <person name="Somerville G.A."/>
            <person name="Musser J.M."/>
        </authorList>
    </citation>
    <scope>NUCLEOTIDE SEQUENCE [LARGE SCALE GENOMIC DNA]</scope>
    <source>
        <strain>ATCC BAA-946 / MGAS10394</strain>
    </source>
</reference>
<protein>
    <recommendedName>
        <fullName evidence="1">Phosphoribosylformylglycinamidine cyclo-ligase</fullName>
        <ecNumber evidence="1">6.3.3.1</ecNumber>
    </recommendedName>
    <alternativeName>
        <fullName evidence="1">AIR synthase</fullName>
    </alternativeName>
    <alternativeName>
        <fullName evidence="1">AIRS</fullName>
    </alternativeName>
    <alternativeName>
        <fullName evidence="1">Phosphoribosyl-aminoimidazole synthetase</fullName>
    </alternativeName>
</protein>
<accession>Q5XEF4</accession>
<proteinExistence type="inferred from homology"/>
<feature type="chain" id="PRO_0000148263" description="Phosphoribosylformylglycinamidine cyclo-ligase">
    <location>
        <begin position="1"/>
        <end position="340"/>
    </location>
</feature>
<sequence length="340" mass="36558">MSEKNAYAKSGVDVEAGYEVVERIKKHVARTERAGVMGVLGGFGGMFDLSKTGVKEPVLVSGTDGVGTKLMLAIKYDKHDTIGQDCVAMCVNDIIAAGAEPLYFLDYIATGKNNPVKLEEVVSGVAEGCVQAGVALIGGETAEMPGMYGEDDYDLAGFAVGVAEKSQIIDGSKVKEGDILLGLASSGIHSNGYSLVRRVFADYTGKELLPELEGKRLKDVLLEPTRIYVKAALPLIKEELVNGIGHITGGGFIENVPRMFADDLAAEIDEDKVPVLPIFKALEKYGDIKHEEMFEIFNMGVGLMLAVSPENVNRVKDLLDEPVYEIGRIIKKADDSVVIK</sequence>
<organism>
    <name type="scientific">Streptococcus pyogenes serotype M6 (strain ATCC BAA-946 / MGAS10394)</name>
    <dbReference type="NCBI Taxonomy" id="286636"/>
    <lineage>
        <taxon>Bacteria</taxon>
        <taxon>Bacillati</taxon>
        <taxon>Bacillota</taxon>
        <taxon>Bacilli</taxon>
        <taxon>Lactobacillales</taxon>
        <taxon>Streptococcaceae</taxon>
        <taxon>Streptococcus</taxon>
    </lineage>
</organism>
<evidence type="ECO:0000255" key="1">
    <source>
        <dbReference type="HAMAP-Rule" id="MF_00741"/>
    </source>
</evidence>
<gene>
    <name evidence="1" type="primary">purM</name>
    <name type="ordered locus">M6_Spy0074</name>
</gene>
<name>PUR5_STRP6</name>
<comment type="catalytic activity">
    <reaction evidence="1">
        <text>2-formamido-N(1)-(5-O-phospho-beta-D-ribosyl)acetamidine + ATP = 5-amino-1-(5-phospho-beta-D-ribosyl)imidazole + ADP + phosphate + H(+)</text>
        <dbReference type="Rhea" id="RHEA:23032"/>
        <dbReference type="ChEBI" id="CHEBI:15378"/>
        <dbReference type="ChEBI" id="CHEBI:30616"/>
        <dbReference type="ChEBI" id="CHEBI:43474"/>
        <dbReference type="ChEBI" id="CHEBI:137981"/>
        <dbReference type="ChEBI" id="CHEBI:147287"/>
        <dbReference type="ChEBI" id="CHEBI:456216"/>
        <dbReference type="EC" id="6.3.3.1"/>
    </reaction>
</comment>
<comment type="pathway">
    <text evidence="1">Purine metabolism; IMP biosynthesis via de novo pathway; 5-amino-1-(5-phospho-D-ribosyl)imidazole from N(2)-formyl-N(1)-(5-phospho-D-ribosyl)glycinamide: step 2/2.</text>
</comment>
<comment type="subcellular location">
    <subcellularLocation>
        <location evidence="1">Cytoplasm</location>
    </subcellularLocation>
</comment>
<comment type="similarity">
    <text evidence="1">Belongs to the AIR synthase family.</text>
</comment>
<keyword id="KW-0067">ATP-binding</keyword>
<keyword id="KW-0963">Cytoplasm</keyword>
<keyword id="KW-0436">Ligase</keyword>
<keyword id="KW-0547">Nucleotide-binding</keyword>
<keyword id="KW-0658">Purine biosynthesis</keyword>
<dbReference type="EC" id="6.3.3.1" evidence="1"/>
<dbReference type="EMBL" id="CP000003">
    <property type="protein sequence ID" value="AAT86209.1"/>
    <property type="molecule type" value="Genomic_DNA"/>
</dbReference>
<dbReference type="RefSeq" id="WP_011184062.1">
    <property type="nucleotide sequence ID" value="NC_006086.1"/>
</dbReference>
<dbReference type="SMR" id="Q5XEF4"/>
<dbReference type="KEGG" id="spa:M6_Spy0074"/>
<dbReference type="HOGENOM" id="CLU_047116_0_0_9"/>
<dbReference type="UniPathway" id="UPA00074">
    <property type="reaction ID" value="UER00129"/>
</dbReference>
<dbReference type="Proteomes" id="UP000001167">
    <property type="component" value="Chromosome"/>
</dbReference>
<dbReference type="GO" id="GO:0005829">
    <property type="term" value="C:cytosol"/>
    <property type="evidence" value="ECO:0007669"/>
    <property type="project" value="TreeGrafter"/>
</dbReference>
<dbReference type="GO" id="GO:0005524">
    <property type="term" value="F:ATP binding"/>
    <property type="evidence" value="ECO:0007669"/>
    <property type="project" value="UniProtKB-KW"/>
</dbReference>
<dbReference type="GO" id="GO:0004637">
    <property type="term" value="F:phosphoribosylamine-glycine ligase activity"/>
    <property type="evidence" value="ECO:0007669"/>
    <property type="project" value="TreeGrafter"/>
</dbReference>
<dbReference type="GO" id="GO:0004641">
    <property type="term" value="F:phosphoribosylformylglycinamidine cyclo-ligase activity"/>
    <property type="evidence" value="ECO:0007669"/>
    <property type="project" value="UniProtKB-UniRule"/>
</dbReference>
<dbReference type="GO" id="GO:0006189">
    <property type="term" value="P:'de novo' IMP biosynthetic process"/>
    <property type="evidence" value="ECO:0007669"/>
    <property type="project" value="UniProtKB-UniRule"/>
</dbReference>
<dbReference type="GO" id="GO:0046084">
    <property type="term" value="P:adenine biosynthetic process"/>
    <property type="evidence" value="ECO:0007669"/>
    <property type="project" value="TreeGrafter"/>
</dbReference>
<dbReference type="CDD" id="cd02196">
    <property type="entry name" value="PurM"/>
    <property type="match status" value="1"/>
</dbReference>
<dbReference type="FunFam" id="3.30.1330.10:FF:000001">
    <property type="entry name" value="Phosphoribosylformylglycinamidine cyclo-ligase"/>
    <property type="match status" value="1"/>
</dbReference>
<dbReference type="FunFam" id="3.90.650.10:FF:000011">
    <property type="entry name" value="Phosphoribosylformylglycinamidine cyclo-ligase"/>
    <property type="match status" value="1"/>
</dbReference>
<dbReference type="Gene3D" id="3.90.650.10">
    <property type="entry name" value="PurM-like C-terminal domain"/>
    <property type="match status" value="1"/>
</dbReference>
<dbReference type="Gene3D" id="3.30.1330.10">
    <property type="entry name" value="PurM-like, N-terminal domain"/>
    <property type="match status" value="1"/>
</dbReference>
<dbReference type="HAMAP" id="MF_00741">
    <property type="entry name" value="AIRS"/>
    <property type="match status" value="1"/>
</dbReference>
<dbReference type="InterPro" id="IPR010918">
    <property type="entry name" value="PurM-like_C_dom"/>
</dbReference>
<dbReference type="InterPro" id="IPR036676">
    <property type="entry name" value="PurM-like_C_sf"/>
</dbReference>
<dbReference type="InterPro" id="IPR016188">
    <property type="entry name" value="PurM-like_N"/>
</dbReference>
<dbReference type="InterPro" id="IPR036921">
    <property type="entry name" value="PurM-like_N_sf"/>
</dbReference>
<dbReference type="InterPro" id="IPR004733">
    <property type="entry name" value="PurM_cligase"/>
</dbReference>
<dbReference type="NCBIfam" id="TIGR00878">
    <property type="entry name" value="purM"/>
    <property type="match status" value="1"/>
</dbReference>
<dbReference type="PANTHER" id="PTHR10520:SF12">
    <property type="entry name" value="TRIFUNCTIONAL PURINE BIOSYNTHETIC PROTEIN ADENOSINE-3"/>
    <property type="match status" value="1"/>
</dbReference>
<dbReference type="PANTHER" id="PTHR10520">
    <property type="entry name" value="TRIFUNCTIONAL PURINE BIOSYNTHETIC PROTEIN ADENOSINE-3-RELATED"/>
    <property type="match status" value="1"/>
</dbReference>
<dbReference type="Pfam" id="PF00586">
    <property type="entry name" value="AIRS"/>
    <property type="match status" value="1"/>
</dbReference>
<dbReference type="Pfam" id="PF02769">
    <property type="entry name" value="AIRS_C"/>
    <property type="match status" value="1"/>
</dbReference>
<dbReference type="SUPFAM" id="SSF56042">
    <property type="entry name" value="PurM C-terminal domain-like"/>
    <property type="match status" value="1"/>
</dbReference>
<dbReference type="SUPFAM" id="SSF55326">
    <property type="entry name" value="PurM N-terminal domain-like"/>
    <property type="match status" value="1"/>
</dbReference>